<accession>Q1QQZ4</accession>
<feature type="chain" id="PRO_1000003785" description="Nucleoid-associated protein Nham_0463">
    <location>
        <begin position="1"/>
        <end position="106"/>
    </location>
</feature>
<sequence>MADFLGMMKQAAQLQSKMKAMQDELDHVEVEGASGGGLVSVRMTAKMEVKAISIDPSLMKPDEREILEDLVVSALGDARRKAEVAMQEKMQALTGGLGLPPGLGLG</sequence>
<organism>
    <name type="scientific">Nitrobacter hamburgensis (strain DSM 10229 / NCIMB 13809 / X14)</name>
    <dbReference type="NCBI Taxonomy" id="323097"/>
    <lineage>
        <taxon>Bacteria</taxon>
        <taxon>Pseudomonadati</taxon>
        <taxon>Pseudomonadota</taxon>
        <taxon>Alphaproteobacteria</taxon>
        <taxon>Hyphomicrobiales</taxon>
        <taxon>Nitrobacteraceae</taxon>
        <taxon>Nitrobacter</taxon>
    </lineage>
</organism>
<gene>
    <name type="ordered locus">Nham_0463</name>
</gene>
<evidence type="ECO:0000255" key="1">
    <source>
        <dbReference type="HAMAP-Rule" id="MF_00274"/>
    </source>
</evidence>
<comment type="function">
    <text evidence="1">Binds to DNA and alters its conformation. May be involved in regulation of gene expression, nucleoid organization and DNA protection.</text>
</comment>
<comment type="subunit">
    <text evidence="1">Homodimer.</text>
</comment>
<comment type="subcellular location">
    <subcellularLocation>
        <location evidence="1">Cytoplasm</location>
        <location evidence="1">Nucleoid</location>
    </subcellularLocation>
</comment>
<comment type="similarity">
    <text evidence="1">Belongs to the YbaB/EbfC family.</text>
</comment>
<protein>
    <recommendedName>
        <fullName evidence="1">Nucleoid-associated protein Nham_0463</fullName>
    </recommendedName>
</protein>
<name>Y463_NITHX</name>
<proteinExistence type="inferred from homology"/>
<keyword id="KW-0963">Cytoplasm</keyword>
<keyword id="KW-0238">DNA-binding</keyword>
<keyword id="KW-1185">Reference proteome</keyword>
<dbReference type="EMBL" id="CP000319">
    <property type="protein sequence ID" value="ABE61353.1"/>
    <property type="molecule type" value="Genomic_DNA"/>
</dbReference>
<dbReference type="RefSeq" id="WP_011509057.1">
    <property type="nucleotide sequence ID" value="NC_007964.1"/>
</dbReference>
<dbReference type="SMR" id="Q1QQZ4"/>
<dbReference type="STRING" id="323097.Nham_0463"/>
<dbReference type="KEGG" id="nha:Nham_0463"/>
<dbReference type="eggNOG" id="COG0718">
    <property type="taxonomic scope" value="Bacteria"/>
</dbReference>
<dbReference type="HOGENOM" id="CLU_140930_0_1_5"/>
<dbReference type="OrthoDB" id="9803080at2"/>
<dbReference type="Proteomes" id="UP000001953">
    <property type="component" value="Chromosome"/>
</dbReference>
<dbReference type="GO" id="GO:0043590">
    <property type="term" value="C:bacterial nucleoid"/>
    <property type="evidence" value="ECO:0007669"/>
    <property type="project" value="UniProtKB-UniRule"/>
</dbReference>
<dbReference type="GO" id="GO:0005829">
    <property type="term" value="C:cytosol"/>
    <property type="evidence" value="ECO:0007669"/>
    <property type="project" value="TreeGrafter"/>
</dbReference>
<dbReference type="GO" id="GO:0003677">
    <property type="term" value="F:DNA binding"/>
    <property type="evidence" value="ECO:0007669"/>
    <property type="project" value="UniProtKB-UniRule"/>
</dbReference>
<dbReference type="Gene3D" id="3.30.1310.10">
    <property type="entry name" value="Nucleoid-associated protein YbaB-like domain"/>
    <property type="match status" value="1"/>
</dbReference>
<dbReference type="HAMAP" id="MF_00274">
    <property type="entry name" value="DNA_YbaB_EbfC"/>
    <property type="match status" value="1"/>
</dbReference>
<dbReference type="InterPro" id="IPR036894">
    <property type="entry name" value="YbaB-like_sf"/>
</dbReference>
<dbReference type="InterPro" id="IPR004401">
    <property type="entry name" value="YbaB/EbfC"/>
</dbReference>
<dbReference type="NCBIfam" id="TIGR00103">
    <property type="entry name" value="DNA_YbaB_EbfC"/>
    <property type="match status" value="1"/>
</dbReference>
<dbReference type="PANTHER" id="PTHR33449">
    <property type="entry name" value="NUCLEOID-ASSOCIATED PROTEIN YBAB"/>
    <property type="match status" value="1"/>
</dbReference>
<dbReference type="PANTHER" id="PTHR33449:SF1">
    <property type="entry name" value="NUCLEOID-ASSOCIATED PROTEIN YBAB"/>
    <property type="match status" value="1"/>
</dbReference>
<dbReference type="Pfam" id="PF02575">
    <property type="entry name" value="YbaB_DNA_bd"/>
    <property type="match status" value="1"/>
</dbReference>
<dbReference type="PIRSF" id="PIRSF004555">
    <property type="entry name" value="UCP004555"/>
    <property type="match status" value="1"/>
</dbReference>
<dbReference type="SUPFAM" id="SSF82607">
    <property type="entry name" value="YbaB-like"/>
    <property type="match status" value="1"/>
</dbReference>
<reference key="1">
    <citation type="submission" date="2006-03" db="EMBL/GenBank/DDBJ databases">
        <title>Complete sequence of chromosome of Nitrobacter hamburgensis X14.</title>
        <authorList>
            <consortium name="US DOE Joint Genome Institute"/>
            <person name="Copeland A."/>
            <person name="Lucas S."/>
            <person name="Lapidus A."/>
            <person name="Barry K."/>
            <person name="Detter J.C."/>
            <person name="Glavina del Rio T."/>
            <person name="Hammon N."/>
            <person name="Israni S."/>
            <person name="Dalin E."/>
            <person name="Tice H."/>
            <person name="Pitluck S."/>
            <person name="Chain P."/>
            <person name="Malfatti S."/>
            <person name="Shin M."/>
            <person name="Vergez L."/>
            <person name="Schmutz J."/>
            <person name="Larimer F."/>
            <person name="Land M."/>
            <person name="Hauser L."/>
            <person name="Kyrpides N."/>
            <person name="Ivanova N."/>
            <person name="Ward B."/>
            <person name="Arp D."/>
            <person name="Klotz M."/>
            <person name="Stein L."/>
            <person name="O'Mullan G."/>
            <person name="Starkenburg S."/>
            <person name="Sayavedra L."/>
            <person name="Poret-Peterson A.T."/>
            <person name="Gentry M.E."/>
            <person name="Bruce D."/>
            <person name="Richardson P."/>
        </authorList>
    </citation>
    <scope>NUCLEOTIDE SEQUENCE [LARGE SCALE GENOMIC DNA]</scope>
    <source>
        <strain>DSM 10229 / NCIMB 13809 / X14</strain>
    </source>
</reference>